<proteinExistence type="inferred from homology"/>
<dbReference type="EC" id="3.1.-.-" evidence="1"/>
<dbReference type="EMBL" id="CP001175">
    <property type="protein sequence ID" value="ACK39453.1"/>
    <property type="molecule type" value="Genomic_DNA"/>
</dbReference>
<dbReference type="RefSeq" id="WP_003730438.1">
    <property type="nucleotide sequence ID" value="NC_011660.1"/>
</dbReference>
<dbReference type="SMR" id="B8DE46"/>
<dbReference type="KEGG" id="lmh:LMHCC_1105"/>
<dbReference type="HOGENOM" id="CLU_106710_3_0_9"/>
<dbReference type="GO" id="GO:0005737">
    <property type="term" value="C:cytoplasm"/>
    <property type="evidence" value="ECO:0007669"/>
    <property type="project" value="UniProtKB-SubCell"/>
</dbReference>
<dbReference type="GO" id="GO:0004222">
    <property type="term" value="F:metalloendopeptidase activity"/>
    <property type="evidence" value="ECO:0007669"/>
    <property type="project" value="InterPro"/>
</dbReference>
<dbReference type="GO" id="GO:0004521">
    <property type="term" value="F:RNA endonuclease activity"/>
    <property type="evidence" value="ECO:0007669"/>
    <property type="project" value="UniProtKB-UniRule"/>
</dbReference>
<dbReference type="GO" id="GO:0008270">
    <property type="term" value="F:zinc ion binding"/>
    <property type="evidence" value="ECO:0007669"/>
    <property type="project" value="UniProtKB-UniRule"/>
</dbReference>
<dbReference type="GO" id="GO:0006364">
    <property type="term" value="P:rRNA processing"/>
    <property type="evidence" value="ECO:0007669"/>
    <property type="project" value="UniProtKB-UniRule"/>
</dbReference>
<dbReference type="Gene3D" id="3.40.390.30">
    <property type="entry name" value="Metalloproteases ('zincins'), catalytic domain"/>
    <property type="match status" value="1"/>
</dbReference>
<dbReference type="HAMAP" id="MF_00009">
    <property type="entry name" value="Endoribonucl_YbeY"/>
    <property type="match status" value="1"/>
</dbReference>
<dbReference type="InterPro" id="IPR023091">
    <property type="entry name" value="MetalPrtase_cat_dom_sf_prd"/>
</dbReference>
<dbReference type="InterPro" id="IPR002036">
    <property type="entry name" value="YbeY"/>
</dbReference>
<dbReference type="InterPro" id="IPR020549">
    <property type="entry name" value="YbeY_CS"/>
</dbReference>
<dbReference type="NCBIfam" id="TIGR00043">
    <property type="entry name" value="rRNA maturation RNase YbeY"/>
    <property type="match status" value="1"/>
</dbReference>
<dbReference type="PANTHER" id="PTHR46986">
    <property type="entry name" value="ENDORIBONUCLEASE YBEY, CHLOROPLASTIC"/>
    <property type="match status" value="1"/>
</dbReference>
<dbReference type="PANTHER" id="PTHR46986:SF1">
    <property type="entry name" value="ENDORIBONUCLEASE YBEY, CHLOROPLASTIC"/>
    <property type="match status" value="1"/>
</dbReference>
<dbReference type="Pfam" id="PF02130">
    <property type="entry name" value="YbeY"/>
    <property type="match status" value="1"/>
</dbReference>
<dbReference type="SUPFAM" id="SSF55486">
    <property type="entry name" value="Metalloproteases ('zincins'), catalytic domain"/>
    <property type="match status" value="1"/>
</dbReference>
<dbReference type="PROSITE" id="PS01306">
    <property type="entry name" value="UPF0054"/>
    <property type="match status" value="1"/>
</dbReference>
<sequence length="161" mass="18484">MTVLEIDLLDETKKLPDEDKQLVENILQFAAEYLKIEQGTELSLTFTTNEGIREINREYRDKDQATDVISFALEEMGDGETEIDWGEFDLETPRMLGDIIISTEKAEEQAKDYGHTKARELGFLAVHGLLHLLGYDHMEPDEEKVMFGLQKEVLDAYGLER</sequence>
<keyword id="KW-0963">Cytoplasm</keyword>
<keyword id="KW-0255">Endonuclease</keyword>
<keyword id="KW-0378">Hydrolase</keyword>
<keyword id="KW-0479">Metal-binding</keyword>
<keyword id="KW-0540">Nuclease</keyword>
<keyword id="KW-0690">Ribosome biogenesis</keyword>
<keyword id="KW-0698">rRNA processing</keyword>
<keyword id="KW-0862">Zinc</keyword>
<evidence type="ECO:0000255" key="1">
    <source>
        <dbReference type="HAMAP-Rule" id="MF_00009"/>
    </source>
</evidence>
<protein>
    <recommendedName>
        <fullName evidence="1">Endoribonuclease YbeY</fullName>
        <ecNumber evidence="1">3.1.-.-</ecNumber>
    </recommendedName>
</protein>
<organism>
    <name type="scientific">Listeria monocytogenes serotype 4a (strain HCC23)</name>
    <dbReference type="NCBI Taxonomy" id="552536"/>
    <lineage>
        <taxon>Bacteria</taxon>
        <taxon>Bacillati</taxon>
        <taxon>Bacillota</taxon>
        <taxon>Bacilli</taxon>
        <taxon>Bacillales</taxon>
        <taxon>Listeriaceae</taxon>
        <taxon>Listeria</taxon>
    </lineage>
</organism>
<feature type="chain" id="PRO_1000199981" description="Endoribonuclease YbeY">
    <location>
        <begin position="1"/>
        <end position="161"/>
    </location>
</feature>
<feature type="binding site" evidence="1">
    <location>
        <position position="127"/>
    </location>
    <ligand>
        <name>Zn(2+)</name>
        <dbReference type="ChEBI" id="CHEBI:29105"/>
        <note>catalytic</note>
    </ligand>
</feature>
<feature type="binding site" evidence="1">
    <location>
        <position position="131"/>
    </location>
    <ligand>
        <name>Zn(2+)</name>
        <dbReference type="ChEBI" id="CHEBI:29105"/>
        <note>catalytic</note>
    </ligand>
</feature>
<feature type="binding site" evidence="1">
    <location>
        <position position="137"/>
    </location>
    <ligand>
        <name>Zn(2+)</name>
        <dbReference type="ChEBI" id="CHEBI:29105"/>
        <note>catalytic</note>
    </ligand>
</feature>
<reference key="1">
    <citation type="journal article" date="2011" name="J. Bacteriol.">
        <title>Genome sequence of lineage III Listeria monocytogenes strain HCC23.</title>
        <authorList>
            <person name="Steele C.L."/>
            <person name="Donaldson J.R."/>
            <person name="Paul D."/>
            <person name="Banes M.M."/>
            <person name="Arick T."/>
            <person name="Bridges S.M."/>
            <person name="Lawrence M.L."/>
        </authorList>
    </citation>
    <scope>NUCLEOTIDE SEQUENCE [LARGE SCALE GENOMIC DNA]</scope>
    <source>
        <strain>HCC23</strain>
    </source>
</reference>
<comment type="function">
    <text evidence="1">Single strand-specific metallo-endoribonuclease involved in late-stage 70S ribosome quality control and in maturation of the 3' terminus of the 16S rRNA.</text>
</comment>
<comment type="cofactor">
    <cofactor evidence="1">
        <name>Zn(2+)</name>
        <dbReference type="ChEBI" id="CHEBI:29105"/>
    </cofactor>
    <text evidence="1">Binds 1 zinc ion.</text>
</comment>
<comment type="subcellular location">
    <subcellularLocation>
        <location evidence="1">Cytoplasm</location>
    </subcellularLocation>
</comment>
<comment type="similarity">
    <text evidence="1">Belongs to the endoribonuclease YbeY family.</text>
</comment>
<accession>B8DE46</accession>
<name>YBEY_LISMH</name>
<gene>
    <name evidence="1" type="primary">ybeY</name>
    <name type="ordered locus">LMHCC_1105</name>
</gene>